<protein>
    <recommendedName>
        <fullName evidence="1">Large ribosomal subunit protein uL24</fullName>
    </recommendedName>
    <alternativeName>
        <fullName evidence="2">50S ribosomal protein L24</fullName>
    </alternativeName>
</protein>
<accession>Q62GL6</accession>
<sequence length="102" mass="10709">MNKIRKGDEVIVITGKDKGKRGVVLAVGAEHVTVEGINLVKKHVKPNPMKGTTGGVEAKTMPLHISNVALVDANGKASRVGIKVEDGKKVRFLKTTGAVLSA</sequence>
<comment type="function">
    <text evidence="1">One of two assembly initiator proteins, it binds directly to the 5'-end of the 23S rRNA, where it nucleates assembly of the 50S subunit.</text>
</comment>
<comment type="function">
    <text evidence="1">One of the proteins that surrounds the polypeptide exit tunnel on the outside of the subunit.</text>
</comment>
<comment type="subunit">
    <text evidence="1">Part of the 50S ribosomal subunit.</text>
</comment>
<comment type="similarity">
    <text evidence="1">Belongs to the universal ribosomal protein uL24 family.</text>
</comment>
<gene>
    <name evidence="1" type="primary">rplX</name>
    <name type="ordered locus">BMA2621</name>
</gene>
<dbReference type="EMBL" id="CP000010">
    <property type="protein sequence ID" value="AAU47859.1"/>
    <property type="molecule type" value="Genomic_DNA"/>
</dbReference>
<dbReference type="RefSeq" id="WP_004197950.1">
    <property type="nucleotide sequence ID" value="NC_006348.1"/>
</dbReference>
<dbReference type="RefSeq" id="YP_104155.1">
    <property type="nucleotide sequence ID" value="NC_006348.1"/>
</dbReference>
<dbReference type="SMR" id="Q62GL6"/>
<dbReference type="GeneID" id="93061821"/>
<dbReference type="KEGG" id="bma:BMA2621"/>
<dbReference type="PATRIC" id="fig|243160.12.peg.2692"/>
<dbReference type="eggNOG" id="COG0198">
    <property type="taxonomic scope" value="Bacteria"/>
</dbReference>
<dbReference type="HOGENOM" id="CLU_093315_2_2_4"/>
<dbReference type="Proteomes" id="UP000006693">
    <property type="component" value="Chromosome 1"/>
</dbReference>
<dbReference type="GO" id="GO:1990904">
    <property type="term" value="C:ribonucleoprotein complex"/>
    <property type="evidence" value="ECO:0007669"/>
    <property type="project" value="UniProtKB-KW"/>
</dbReference>
<dbReference type="GO" id="GO:0005840">
    <property type="term" value="C:ribosome"/>
    <property type="evidence" value="ECO:0007669"/>
    <property type="project" value="UniProtKB-KW"/>
</dbReference>
<dbReference type="GO" id="GO:0019843">
    <property type="term" value="F:rRNA binding"/>
    <property type="evidence" value="ECO:0007669"/>
    <property type="project" value="UniProtKB-UniRule"/>
</dbReference>
<dbReference type="GO" id="GO:0003735">
    <property type="term" value="F:structural constituent of ribosome"/>
    <property type="evidence" value="ECO:0007669"/>
    <property type="project" value="InterPro"/>
</dbReference>
<dbReference type="GO" id="GO:0006412">
    <property type="term" value="P:translation"/>
    <property type="evidence" value="ECO:0007669"/>
    <property type="project" value="UniProtKB-UniRule"/>
</dbReference>
<dbReference type="CDD" id="cd06089">
    <property type="entry name" value="KOW_RPL26"/>
    <property type="match status" value="1"/>
</dbReference>
<dbReference type="Gene3D" id="2.30.30.30">
    <property type="match status" value="1"/>
</dbReference>
<dbReference type="HAMAP" id="MF_01326_B">
    <property type="entry name" value="Ribosomal_uL24_B"/>
    <property type="match status" value="1"/>
</dbReference>
<dbReference type="InterPro" id="IPR005824">
    <property type="entry name" value="KOW"/>
</dbReference>
<dbReference type="InterPro" id="IPR014722">
    <property type="entry name" value="Rib_uL2_dom2"/>
</dbReference>
<dbReference type="InterPro" id="IPR003256">
    <property type="entry name" value="Ribosomal_uL24"/>
</dbReference>
<dbReference type="InterPro" id="IPR005825">
    <property type="entry name" value="Ribosomal_uL24_CS"/>
</dbReference>
<dbReference type="InterPro" id="IPR041988">
    <property type="entry name" value="Ribosomal_uL24_KOW"/>
</dbReference>
<dbReference type="InterPro" id="IPR008991">
    <property type="entry name" value="Translation_prot_SH3-like_sf"/>
</dbReference>
<dbReference type="NCBIfam" id="TIGR01079">
    <property type="entry name" value="rplX_bact"/>
    <property type="match status" value="1"/>
</dbReference>
<dbReference type="PANTHER" id="PTHR12903">
    <property type="entry name" value="MITOCHONDRIAL RIBOSOMAL PROTEIN L24"/>
    <property type="match status" value="1"/>
</dbReference>
<dbReference type="Pfam" id="PF00467">
    <property type="entry name" value="KOW"/>
    <property type="match status" value="1"/>
</dbReference>
<dbReference type="Pfam" id="PF17136">
    <property type="entry name" value="ribosomal_L24"/>
    <property type="match status" value="1"/>
</dbReference>
<dbReference type="SUPFAM" id="SSF50104">
    <property type="entry name" value="Translation proteins SH3-like domain"/>
    <property type="match status" value="1"/>
</dbReference>
<dbReference type="PROSITE" id="PS01108">
    <property type="entry name" value="RIBOSOMAL_L24"/>
    <property type="match status" value="1"/>
</dbReference>
<feature type="chain" id="PRO_0000241576" description="Large ribosomal subunit protein uL24">
    <location>
        <begin position="1"/>
        <end position="102"/>
    </location>
</feature>
<name>RL24_BURMA</name>
<evidence type="ECO:0000255" key="1">
    <source>
        <dbReference type="HAMAP-Rule" id="MF_01326"/>
    </source>
</evidence>
<evidence type="ECO:0000305" key="2"/>
<reference key="1">
    <citation type="journal article" date="2004" name="Proc. Natl. Acad. Sci. U.S.A.">
        <title>Structural flexibility in the Burkholderia mallei genome.</title>
        <authorList>
            <person name="Nierman W.C."/>
            <person name="DeShazer D."/>
            <person name="Kim H.S."/>
            <person name="Tettelin H."/>
            <person name="Nelson K.E."/>
            <person name="Feldblyum T.V."/>
            <person name="Ulrich R.L."/>
            <person name="Ronning C.M."/>
            <person name="Brinkac L.M."/>
            <person name="Daugherty S.C."/>
            <person name="Davidsen T.D."/>
            <person name="DeBoy R.T."/>
            <person name="Dimitrov G."/>
            <person name="Dodson R.J."/>
            <person name="Durkin A.S."/>
            <person name="Gwinn M.L."/>
            <person name="Haft D.H."/>
            <person name="Khouri H.M."/>
            <person name="Kolonay J.F."/>
            <person name="Madupu R."/>
            <person name="Mohammoud Y."/>
            <person name="Nelson W.C."/>
            <person name="Radune D."/>
            <person name="Romero C.M."/>
            <person name="Sarria S."/>
            <person name="Selengut J."/>
            <person name="Shamblin C."/>
            <person name="Sullivan S.A."/>
            <person name="White O."/>
            <person name="Yu Y."/>
            <person name="Zafar N."/>
            <person name="Zhou L."/>
            <person name="Fraser C.M."/>
        </authorList>
    </citation>
    <scope>NUCLEOTIDE SEQUENCE [LARGE SCALE GENOMIC DNA]</scope>
    <source>
        <strain>ATCC 23344</strain>
    </source>
</reference>
<organism>
    <name type="scientific">Burkholderia mallei (strain ATCC 23344)</name>
    <dbReference type="NCBI Taxonomy" id="243160"/>
    <lineage>
        <taxon>Bacteria</taxon>
        <taxon>Pseudomonadati</taxon>
        <taxon>Pseudomonadota</taxon>
        <taxon>Betaproteobacteria</taxon>
        <taxon>Burkholderiales</taxon>
        <taxon>Burkholderiaceae</taxon>
        <taxon>Burkholderia</taxon>
        <taxon>pseudomallei group</taxon>
    </lineage>
</organism>
<keyword id="KW-1185">Reference proteome</keyword>
<keyword id="KW-0687">Ribonucleoprotein</keyword>
<keyword id="KW-0689">Ribosomal protein</keyword>
<keyword id="KW-0694">RNA-binding</keyword>
<keyword id="KW-0699">rRNA-binding</keyword>
<proteinExistence type="inferred from homology"/>